<keyword id="KW-0031">Aminopeptidase</keyword>
<keyword id="KW-0963">Cytoplasm</keyword>
<keyword id="KW-0378">Hydrolase</keyword>
<keyword id="KW-0464">Manganese</keyword>
<keyword id="KW-0479">Metal-binding</keyword>
<keyword id="KW-0645">Protease</keyword>
<keyword id="KW-1185">Reference proteome</keyword>
<accession>B2TYY4</accession>
<sequence>MEFSVKSGSPEKQRSACIVVGVFEPRRLSPIAEQLDKISDGYISALLRRGELEGKPGQTLLLHHVPNVLSERILLIGCGKERELDERQYKQVIQKTINTLNDTGSMEAVCFLTELHVKGRNNYWKVRQAVETAKETLYSFDQLKTNKSEPRRPLRKMVFNVPTRRELTSGERAILHGLAIAAAIKAAKDLGNMPPNICNAAYLASQARQLADSYSKNVITRVIGEQQMKELGMHSYLAVGQGSQNESLMSVIEYKGNASEDARPIVLVGKGLTFDSGGISIKPSEGMDEMKYDMCGAAAVYGVMRMVAELQLPINVIGVLAGCENMPGGRAYRPGDVLTTMSGQTVEVLNTDAEGRLVLCDVLTYVERFEPEAVIDVATLTGACVIALGHHITGLMANHNPLAHELIAASEQSGDRAWRLPLGDEYQEQLESNFADMANIGGRPGGAITAGCFLSRFTRKYNWAHLDIAGTAWRSGKAKGATGRPVALLAQFLLNRAGFNGEE</sequence>
<feature type="chain" id="PRO_1000098351" description="Probable cytosol aminopeptidase">
    <location>
        <begin position="1"/>
        <end position="503"/>
    </location>
</feature>
<feature type="active site" evidence="1">
    <location>
        <position position="282"/>
    </location>
</feature>
<feature type="active site" evidence="1">
    <location>
        <position position="356"/>
    </location>
</feature>
<feature type="binding site" evidence="1">
    <location>
        <position position="270"/>
    </location>
    <ligand>
        <name>Mn(2+)</name>
        <dbReference type="ChEBI" id="CHEBI:29035"/>
        <label>2</label>
    </ligand>
</feature>
<feature type="binding site" evidence="1">
    <location>
        <position position="275"/>
    </location>
    <ligand>
        <name>Mn(2+)</name>
        <dbReference type="ChEBI" id="CHEBI:29035"/>
        <label>1</label>
    </ligand>
</feature>
<feature type="binding site" evidence="1">
    <location>
        <position position="275"/>
    </location>
    <ligand>
        <name>Mn(2+)</name>
        <dbReference type="ChEBI" id="CHEBI:29035"/>
        <label>2</label>
    </ligand>
</feature>
<feature type="binding site" evidence="1">
    <location>
        <position position="293"/>
    </location>
    <ligand>
        <name>Mn(2+)</name>
        <dbReference type="ChEBI" id="CHEBI:29035"/>
        <label>2</label>
    </ligand>
</feature>
<feature type="binding site" evidence="1">
    <location>
        <position position="352"/>
    </location>
    <ligand>
        <name>Mn(2+)</name>
        <dbReference type="ChEBI" id="CHEBI:29035"/>
        <label>1</label>
    </ligand>
</feature>
<feature type="binding site" evidence="1">
    <location>
        <position position="354"/>
    </location>
    <ligand>
        <name>Mn(2+)</name>
        <dbReference type="ChEBI" id="CHEBI:29035"/>
        <label>1</label>
    </ligand>
</feature>
<feature type="binding site" evidence="1">
    <location>
        <position position="354"/>
    </location>
    <ligand>
        <name>Mn(2+)</name>
        <dbReference type="ChEBI" id="CHEBI:29035"/>
        <label>2</label>
    </ligand>
</feature>
<evidence type="ECO:0000255" key="1">
    <source>
        <dbReference type="HAMAP-Rule" id="MF_00181"/>
    </source>
</evidence>
<organism>
    <name type="scientific">Shigella boydii serotype 18 (strain CDC 3083-94 / BS512)</name>
    <dbReference type="NCBI Taxonomy" id="344609"/>
    <lineage>
        <taxon>Bacteria</taxon>
        <taxon>Pseudomonadati</taxon>
        <taxon>Pseudomonadota</taxon>
        <taxon>Gammaproteobacteria</taxon>
        <taxon>Enterobacterales</taxon>
        <taxon>Enterobacteriaceae</taxon>
        <taxon>Shigella</taxon>
    </lineage>
</organism>
<gene>
    <name evidence="1" type="primary">pepA</name>
    <name type="ordered locus">SbBS512_E4821</name>
</gene>
<protein>
    <recommendedName>
        <fullName evidence="1">Probable cytosol aminopeptidase</fullName>
        <ecNumber evidence="1">3.4.11.1</ecNumber>
    </recommendedName>
    <alternativeName>
        <fullName evidence="1">Leucine aminopeptidase</fullName>
        <shortName evidence="1">LAP</shortName>
        <ecNumber evidence="1">3.4.11.10</ecNumber>
    </alternativeName>
    <alternativeName>
        <fullName evidence="1">Leucyl aminopeptidase</fullName>
    </alternativeName>
</protein>
<comment type="function">
    <text evidence="1">Presumably involved in the processing and regular turnover of intracellular proteins. Catalyzes the removal of unsubstituted N-terminal amino acids from various peptides.</text>
</comment>
<comment type="catalytic activity">
    <reaction evidence="1">
        <text>Release of an N-terminal amino acid, Xaa-|-Yaa-, in which Xaa is preferably Leu, but may be other amino acids including Pro although not Arg or Lys, and Yaa may be Pro. Amino acid amides and methyl esters are also readily hydrolyzed, but rates on arylamides are exceedingly low.</text>
        <dbReference type="EC" id="3.4.11.1"/>
    </reaction>
</comment>
<comment type="catalytic activity">
    <reaction evidence="1">
        <text>Release of an N-terminal amino acid, preferentially leucine, but not glutamic or aspartic acids.</text>
        <dbReference type="EC" id="3.4.11.10"/>
    </reaction>
</comment>
<comment type="cofactor">
    <cofactor evidence="1">
        <name>Mn(2+)</name>
        <dbReference type="ChEBI" id="CHEBI:29035"/>
    </cofactor>
    <text evidence="1">Binds 2 manganese ions per subunit.</text>
</comment>
<comment type="subcellular location">
    <subcellularLocation>
        <location evidence="1">Cytoplasm</location>
    </subcellularLocation>
</comment>
<comment type="similarity">
    <text evidence="1">Belongs to the peptidase M17 family.</text>
</comment>
<name>AMPA_SHIB3</name>
<dbReference type="EC" id="3.4.11.1" evidence="1"/>
<dbReference type="EC" id="3.4.11.10" evidence="1"/>
<dbReference type="EMBL" id="CP001063">
    <property type="protein sequence ID" value="ACD06458.1"/>
    <property type="molecule type" value="Genomic_DNA"/>
</dbReference>
<dbReference type="RefSeq" id="WP_000397138.1">
    <property type="nucleotide sequence ID" value="NC_010658.1"/>
</dbReference>
<dbReference type="SMR" id="B2TYY4"/>
<dbReference type="STRING" id="344609.SbBS512_E4821"/>
<dbReference type="MEROPS" id="M17.003"/>
<dbReference type="KEGG" id="sbc:SbBS512_E4821"/>
<dbReference type="HOGENOM" id="CLU_013734_2_2_6"/>
<dbReference type="Proteomes" id="UP000001030">
    <property type="component" value="Chromosome"/>
</dbReference>
<dbReference type="GO" id="GO:0005737">
    <property type="term" value="C:cytoplasm"/>
    <property type="evidence" value="ECO:0007669"/>
    <property type="project" value="UniProtKB-SubCell"/>
</dbReference>
<dbReference type="GO" id="GO:0030145">
    <property type="term" value="F:manganese ion binding"/>
    <property type="evidence" value="ECO:0007669"/>
    <property type="project" value="UniProtKB-UniRule"/>
</dbReference>
<dbReference type="GO" id="GO:0070006">
    <property type="term" value="F:metalloaminopeptidase activity"/>
    <property type="evidence" value="ECO:0007669"/>
    <property type="project" value="InterPro"/>
</dbReference>
<dbReference type="GO" id="GO:0006508">
    <property type="term" value="P:proteolysis"/>
    <property type="evidence" value="ECO:0007669"/>
    <property type="project" value="UniProtKB-KW"/>
</dbReference>
<dbReference type="CDD" id="cd00433">
    <property type="entry name" value="Peptidase_M17"/>
    <property type="match status" value="1"/>
</dbReference>
<dbReference type="FunFam" id="3.40.220.10:FF:000001">
    <property type="entry name" value="Probable cytosol aminopeptidase"/>
    <property type="match status" value="1"/>
</dbReference>
<dbReference type="FunFam" id="3.40.630.10:FF:000004">
    <property type="entry name" value="Probable cytosol aminopeptidase"/>
    <property type="match status" value="1"/>
</dbReference>
<dbReference type="Gene3D" id="3.40.220.10">
    <property type="entry name" value="Leucine Aminopeptidase, subunit E, domain 1"/>
    <property type="match status" value="1"/>
</dbReference>
<dbReference type="Gene3D" id="3.40.630.10">
    <property type="entry name" value="Zn peptidases"/>
    <property type="match status" value="1"/>
</dbReference>
<dbReference type="HAMAP" id="MF_00181">
    <property type="entry name" value="Cytosol_peptidase_M17"/>
    <property type="match status" value="1"/>
</dbReference>
<dbReference type="InterPro" id="IPR011356">
    <property type="entry name" value="Leucine_aapep/pepB"/>
</dbReference>
<dbReference type="InterPro" id="IPR043472">
    <property type="entry name" value="Macro_dom-like"/>
</dbReference>
<dbReference type="InterPro" id="IPR000819">
    <property type="entry name" value="Peptidase_M17_C"/>
</dbReference>
<dbReference type="InterPro" id="IPR023042">
    <property type="entry name" value="Peptidase_M17_leu_NH2_pept"/>
</dbReference>
<dbReference type="InterPro" id="IPR008283">
    <property type="entry name" value="Peptidase_M17_N"/>
</dbReference>
<dbReference type="NCBIfam" id="NF002072">
    <property type="entry name" value="PRK00913.1-1"/>
    <property type="match status" value="1"/>
</dbReference>
<dbReference type="NCBIfam" id="NF002073">
    <property type="entry name" value="PRK00913.1-2"/>
    <property type="match status" value="1"/>
</dbReference>
<dbReference type="NCBIfam" id="NF002074">
    <property type="entry name" value="PRK00913.1-4"/>
    <property type="match status" value="1"/>
</dbReference>
<dbReference type="PANTHER" id="PTHR11963:SF23">
    <property type="entry name" value="CYTOSOL AMINOPEPTIDASE"/>
    <property type="match status" value="1"/>
</dbReference>
<dbReference type="PANTHER" id="PTHR11963">
    <property type="entry name" value="LEUCINE AMINOPEPTIDASE-RELATED"/>
    <property type="match status" value="1"/>
</dbReference>
<dbReference type="Pfam" id="PF00883">
    <property type="entry name" value="Peptidase_M17"/>
    <property type="match status" value="1"/>
</dbReference>
<dbReference type="Pfam" id="PF02789">
    <property type="entry name" value="Peptidase_M17_N"/>
    <property type="match status" value="1"/>
</dbReference>
<dbReference type="PRINTS" id="PR00481">
    <property type="entry name" value="LAMNOPPTDASE"/>
</dbReference>
<dbReference type="SUPFAM" id="SSF52949">
    <property type="entry name" value="Macro domain-like"/>
    <property type="match status" value="1"/>
</dbReference>
<dbReference type="SUPFAM" id="SSF53187">
    <property type="entry name" value="Zn-dependent exopeptidases"/>
    <property type="match status" value="1"/>
</dbReference>
<dbReference type="PROSITE" id="PS00631">
    <property type="entry name" value="CYTOSOL_AP"/>
    <property type="match status" value="1"/>
</dbReference>
<reference key="1">
    <citation type="submission" date="2008-05" db="EMBL/GenBank/DDBJ databases">
        <title>Complete sequence of Shigella boydii serotype 18 strain BS512.</title>
        <authorList>
            <person name="Rasko D.A."/>
            <person name="Rosovitz M."/>
            <person name="Maurelli A.T."/>
            <person name="Myers G."/>
            <person name="Seshadri R."/>
            <person name="Cer R."/>
            <person name="Jiang L."/>
            <person name="Ravel J."/>
            <person name="Sebastian Y."/>
        </authorList>
    </citation>
    <scope>NUCLEOTIDE SEQUENCE [LARGE SCALE GENOMIC DNA]</scope>
    <source>
        <strain>CDC 3083-94 / BS512</strain>
    </source>
</reference>
<proteinExistence type="inferred from homology"/>